<sequence>MTFKRRNGGRNKHGRGHVKYIRCSNCAKCCPKDKAIKRFQVRNIVEQAAIRDVQEACVHDGYVLPKLYAKVHHCVSCAIHAHIVRVRSRENRRDRRPPERFRRREDRPQGPRPGGGAPAPGGAAAPAPNVART</sequence>
<gene>
    <name type="primary">RPS26</name>
    <name type="ordered locus">Os01g0823300</name>
    <name type="ordered locus">LOC_Os01g60790</name>
    <name evidence="3" type="ORF">OsJ_03907</name>
    <name type="ORF">P0031D02.12</name>
    <name type="ORF">P0485B12.44</name>
</gene>
<keyword id="KW-1185">Reference proteome</keyword>
<keyword id="KW-0687">Ribonucleoprotein</keyword>
<keyword id="KW-0689">Ribosomal protein</keyword>
<organism>
    <name type="scientific">Oryza sativa subsp. japonica</name>
    <name type="common">Rice</name>
    <dbReference type="NCBI Taxonomy" id="39947"/>
    <lineage>
        <taxon>Eukaryota</taxon>
        <taxon>Viridiplantae</taxon>
        <taxon>Streptophyta</taxon>
        <taxon>Embryophyta</taxon>
        <taxon>Tracheophyta</taxon>
        <taxon>Spermatophyta</taxon>
        <taxon>Magnoliopsida</taxon>
        <taxon>Liliopsida</taxon>
        <taxon>Poales</taxon>
        <taxon>Poaceae</taxon>
        <taxon>BOP clade</taxon>
        <taxon>Oryzoideae</taxon>
        <taxon>Oryzeae</taxon>
        <taxon>Oryzinae</taxon>
        <taxon>Oryza</taxon>
        <taxon>Oryza sativa</taxon>
    </lineage>
</organism>
<dbReference type="EMBL" id="D38011">
    <property type="protein sequence ID" value="BAA07208.1"/>
    <property type="molecule type" value="mRNA"/>
</dbReference>
<dbReference type="EMBL" id="AP003230">
    <property type="protein sequence ID" value="BAD87076.1"/>
    <property type="molecule type" value="Genomic_DNA"/>
</dbReference>
<dbReference type="EMBL" id="AP003348">
    <property type="protein sequence ID" value="BAD73505.1"/>
    <property type="molecule type" value="Genomic_DNA"/>
</dbReference>
<dbReference type="EMBL" id="AP008207">
    <property type="protein sequence ID" value="BAF06572.1"/>
    <property type="molecule type" value="Genomic_DNA"/>
</dbReference>
<dbReference type="EMBL" id="AP014957">
    <property type="protein sequence ID" value="BAS74989.1"/>
    <property type="molecule type" value="Genomic_DNA"/>
</dbReference>
<dbReference type="EMBL" id="CM000138">
    <property type="protein sequence ID" value="EAZ13982.1"/>
    <property type="molecule type" value="Genomic_DNA"/>
</dbReference>
<dbReference type="PIR" id="T04081">
    <property type="entry name" value="T04081"/>
</dbReference>
<dbReference type="RefSeq" id="XP_015622447.1">
    <property type="nucleotide sequence ID" value="XM_015766961.1"/>
</dbReference>
<dbReference type="SMR" id="P49216"/>
<dbReference type="FunCoup" id="P49216">
    <property type="interactions" value="2495"/>
</dbReference>
<dbReference type="STRING" id="39947.P49216"/>
<dbReference type="PaxDb" id="39947-P49216"/>
<dbReference type="EnsemblPlants" id="Os01t0823300-00">
    <property type="protein sequence ID" value="Os01t0823300-00"/>
    <property type="gene ID" value="Os01g0823300"/>
</dbReference>
<dbReference type="Gramene" id="Os01t0823300-00">
    <property type="protein sequence ID" value="Os01t0823300-00"/>
    <property type="gene ID" value="Os01g0823300"/>
</dbReference>
<dbReference type="KEGG" id="dosa:Os01g0823300"/>
<dbReference type="eggNOG" id="KOG1768">
    <property type="taxonomic scope" value="Eukaryota"/>
</dbReference>
<dbReference type="HOGENOM" id="CLU_129451_2_0_1"/>
<dbReference type="InParanoid" id="P49216"/>
<dbReference type="OMA" id="KCYCVSC"/>
<dbReference type="OrthoDB" id="10262653at2759"/>
<dbReference type="Proteomes" id="UP000000763">
    <property type="component" value="Chromosome 1"/>
</dbReference>
<dbReference type="Proteomes" id="UP000007752">
    <property type="component" value="Chromosome 1"/>
</dbReference>
<dbReference type="Proteomes" id="UP000059680">
    <property type="component" value="Chromosome 1"/>
</dbReference>
<dbReference type="GO" id="GO:0022627">
    <property type="term" value="C:cytosolic small ribosomal subunit"/>
    <property type="evidence" value="ECO:0000318"/>
    <property type="project" value="GO_Central"/>
</dbReference>
<dbReference type="GO" id="GO:0003729">
    <property type="term" value="F:mRNA binding"/>
    <property type="evidence" value="ECO:0000318"/>
    <property type="project" value="GO_Central"/>
</dbReference>
<dbReference type="GO" id="GO:0003735">
    <property type="term" value="F:structural constituent of ribosome"/>
    <property type="evidence" value="ECO:0000318"/>
    <property type="project" value="GO_Central"/>
</dbReference>
<dbReference type="GO" id="GO:0006412">
    <property type="term" value="P:translation"/>
    <property type="evidence" value="ECO:0007669"/>
    <property type="project" value="InterPro"/>
</dbReference>
<dbReference type="FunFam" id="3.30.1740.20:FF:000002">
    <property type="entry name" value="40S ribosomal protein S26"/>
    <property type="match status" value="1"/>
</dbReference>
<dbReference type="Gene3D" id="3.30.1740.20">
    <property type="entry name" value="Ribosomal protein S26e"/>
    <property type="match status" value="1"/>
</dbReference>
<dbReference type="InterPro" id="IPR000892">
    <property type="entry name" value="Ribosomal_eS26"/>
</dbReference>
<dbReference type="InterPro" id="IPR047864">
    <property type="entry name" value="Ribosomal_eS26_CS"/>
</dbReference>
<dbReference type="InterPro" id="IPR038551">
    <property type="entry name" value="Ribosomal_eS26_sf"/>
</dbReference>
<dbReference type="PANTHER" id="PTHR12538">
    <property type="entry name" value="40S RIBOSOMAL PROTEIN S26"/>
    <property type="match status" value="1"/>
</dbReference>
<dbReference type="PANTHER" id="PTHR12538:SF1">
    <property type="entry name" value="SMALL RIBOSOMAL SUBUNIT PROTEIN ES26"/>
    <property type="match status" value="1"/>
</dbReference>
<dbReference type="Pfam" id="PF01283">
    <property type="entry name" value="Ribosomal_S26e"/>
    <property type="match status" value="1"/>
</dbReference>
<dbReference type="PROSITE" id="PS00733">
    <property type="entry name" value="RIBOSOMAL_S26E"/>
    <property type="match status" value="1"/>
</dbReference>
<evidence type="ECO:0000256" key="1">
    <source>
        <dbReference type="SAM" id="MobiDB-lite"/>
    </source>
</evidence>
<evidence type="ECO:0000305" key="2"/>
<evidence type="ECO:0000312" key="3">
    <source>
        <dbReference type="EMBL" id="EAZ13982.1"/>
    </source>
</evidence>
<name>RS26_ORYSJ</name>
<protein>
    <recommendedName>
        <fullName evidence="2">Small ribosomal subunit protein eS26</fullName>
    </recommendedName>
    <alternativeName>
        <fullName>40S ribosomal protein S26</fullName>
    </alternativeName>
    <alternativeName>
        <fullName>S31</fullName>
    </alternativeName>
</protein>
<reference key="1">
    <citation type="submission" date="1995-09" db="EMBL/GenBank/DDBJ databases">
        <title>cDNA sequence of ribosomal protein S31 homolog from rice calli exposed to salt stress.</title>
        <authorList>
            <person name="Nakamura I."/>
            <person name="Kameya N."/>
            <person name="Aoki T."/>
            <person name="Tada T."/>
            <person name="Norita E."/>
            <person name="Kanzaki H."/>
            <person name="Uchimiya H."/>
        </authorList>
    </citation>
    <scope>NUCLEOTIDE SEQUENCE [MRNA]</scope>
    <source>
        <tissue>Callus</tissue>
    </source>
</reference>
<reference key="2">
    <citation type="journal article" date="2002" name="Nature">
        <title>The genome sequence and structure of rice chromosome 1.</title>
        <authorList>
            <person name="Sasaki T."/>
            <person name="Matsumoto T."/>
            <person name="Yamamoto K."/>
            <person name="Sakata K."/>
            <person name="Baba T."/>
            <person name="Katayose Y."/>
            <person name="Wu J."/>
            <person name="Niimura Y."/>
            <person name="Cheng Z."/>
            <person name="Nagamura Y."/>
            <person name="Antonio B.A."/>
            <person name="Kanamori H."/>
            <person name="Hosokawa S."/>
            <person name="Masukawa M."/>
            <person name="Arikawa K."/>
            <person name="Chiden Y."/>
            <person name="Hayashi M."/>
            <person name="Okamoto M."/>
            <person name="Ando T."/>
            <person name="Aoki H."/>
            <person name="Arita K."/>
            <person name="Hamada M."/>
            <person name="Harada C."/>
            <person name="Hijishita S."/>
            <person name="Honda M."/>
            <person name="Ichikawa Y."/>
            <person name="Idonuma A."/>
            <person name="Iijima M."/>
            <person name="Ikeda M."/>
            <person name="Ikeno M."/>
            <person name="Ito S."/>
            <person name="Ito T."/>
            <person name="Ito Y."/>
            <person name="Ito Y."/>
            <person name="Iwabuchi A."/>
            <person name="Kamiya K."/>
            <person name="Karasawa W."/>
            <person name="Katagiri S."/>
            <person name="Kikuta A."/>
            <person name="Kobayashi N."/>
            <person name="Kono I."/>
            <person name="Machita K."/>
            <person name="Maehara T."/>
            <person name="Mizuno H."/>
            <person name="Mizubayashi T."/>
            <person name="Mukai Y."/>
            <person name="Nagasaki H."/>
            <person name="Nakashima M."/>
            <person name="Nakama Y."/>
            <person name="Nakamichi Y."/>
            <person name="Nakamura M."/>
            <person name="Namiki N."/>
            <person name="Negishi M."/>
            <person name="Ohta I."/>
            <person name="Ono N."/>
            <person name="Saji S."/>
            <person name="Sakai K."/>
            <person name="Shibata M."/>
            <person name="Shimokawa T."/>
            <person name="Shomura A."/>
            <person name="Song J."/>
            <person name="Takazaki Y."/>
            <person name="Terasawa K."/>
            <person name="Tsuji K."/>
            <person name="Waki K."/>
            <person name="Yamagata H."/>
            <person name="Yamane H."/>
            <person name="Yoshiki S."/>
            <person name="Yoshihara R."/>
            <person name="Yukawa K."/>
            <person name="Zhong H."/>
            <person name="Iwama H."/>
            <person name="Endo T."/>
            <person name="Ito H."/>
            <person name="Hahn J.H."/>
            <person name="Kim H.-I."/>
            <person name="Eun M.-Y."/>
            <person name="Yano M."/>
            <person name="Jiang J."/>
            <person name="Gojobori T."/>
        </authorList>
    </citation>
    <scope>NUCLEOTIDE SEQUENCE [LARGE SCALE GENOMIC DNA]</scope>
    <source>
        <strain>cv. Nipponbare</strain>
    </source>
</reference>
<reference key="3">
    <citation type="journal article" date="2005" name="Nature">
        <title>The map-based sequence of the rice genome.</title>
        <authorList>
            <consortium name="International rice genome sequencing project (IRGSP)"/>
        </authorList>
    </citation>
    <scope>NUCLEOTIDE SEQUENCE [LARGE SCALE GENOMIC DNA]</scope>
    <source>
        <strain>cv. Nipponbare</strain>
    </source>
</reference>
<reference key="4">
    <citation type="journal article" date="2008" name="Nucleic Acids Res.">
        <title>The rice annotation project database (RAP-DB): 2008 update.</title>
        <authorList>
            <consortium name="The rice annotation project (RAP)"/>
        </authorList>
    </citation>
    <scope>GENOME REANNOTATION</scope>
    <source>
        <strain>cv. Nipponbare</strain>
    </source>
</reference>
<reference key="5">
    <citation type="journal article" date="2013" name="Rice">
        <title>Improvement of the Oryza sativa Nipponbare reference genome using next generation sequence and optical map data.</title>
        <authorList>
            <person name="Kawahara Y."/>
            <person name="de la Bastide M."/>
            <person name="Hamilton J.P."/>
            <person name="Kanamori H."/>
            <person name="McCombie W.R."/>
            <person name="Ouyang S."/>
            <person name="Schwartz D.C."/>
            <person name="Tanaka T."/>
            <person name="Wu J."/>
            <person name="Zhou S."/>
            <person name="Childs K.L."/>
            <person name="Davidson R.M."/>
            <person name="Lin H."/>
            <person name="Quesada-Ocampo L."/>
            <person name="Vaillancourt B."/>
            <person name="Sakai H."/>
            <person name="Lee S.S."/>
            <person name="Kim J."/>
            <person name="Numa H."/>
            <person name="Itoh T."/>
            <person name="Buell C.R."/>
            <person name="Matsumoto T."/>
        </authorList>
    </citation>
    <scope>GENOME REANNOTATION</scope>
    <source>
        <strain>cv. Nipponbare</strain>
    </source>
</reference>
<reference key="6">
    <citation type="journal article" date="2005" name="PLoS Biol.">
        <title>The genomes of Oryza sativa: a history of duplications.</title>
        <authorList>
            <person name="Yu J."/>
            <person name="Wang J."/>
            <person name="Lin W."/>
            <person name="Li S."/>
            <person name="Li H."/>
            <person name="Zhou J."/>
            <person name="Ni P."/>
            <person name="Dong W."/>
            <person name="Hu S."/>
            <person name="Zeng C."/>
            <person name="Zhang J."/>
            <person name="Zhang Y."/>
            <person name="Li R."/>
            <person name="Xu Z."/>
            <person name="Li S."/>
            <person name="Li X."/>
            <person name="Zheng H."/>
            <person name="Cong L."/>
            <person name="Lin L."/>
            <person name="Yin J."/>
            <person name="Geng J."/>
            <person name="Li G."/>
            <person name="Shi J."/>
            <person name="Liu J."/>
            <person name="Lv H."/>
            <person name="Li J."/>
            <person name="Wang J."/>
            <person name="Deng Y."/>
            <person name="Ran L."/>
            <person name="Shi X."/>
            <person name="Wang X."/>
            <person name="Wu Q."/>
            <person name="Li C."/>
            <person name="Ren X."/>
            <person name="Wang J."/>
            <person name="Wang X."/>
            <person name="Li D."/>
            <person name="Liu D."/>
            <person name="Zhang X."/>
            <person name="Ji Z."/>
            <person name="Zhao W."/>
            <person name="Sun Y."/>
            <person name="Zhang Z."/>
            <person name="Bao J."/>
            <person name="Han Y."/>
            <person name="Dong L."/>
            <person name="Ji J."/>
            <person name="Chen P."/>
            <person name="Wu S."/>
            <person name="Liu J."/>
            <person name="Xiao Y."/>
            <person name="Bu D."/>
            <person name="Tan J."/>
            <person name="Yang L."/>
            <person name="Ye C."/>
            <person name="Zhang J."/>
            <person name="Xu J."/>
            <person name="Zhou Y."/>
            <person name="Yu Y."/>
            <person name="Zhang B."/>
            <person name="Zhuang S."/>
            <person name="Wei H."/>
            <person name="Liu B."/>
            <person name="Lei M."/>
            <person name="Yu H."/>
            <person name="Li Y."/>
            <person name="Xu H."/>
            <person name="Wei S."/>
            <person name="He X."/>
            <person name="Fang L."/>
            <person name="Zhang Z."/>
            <person name="Zhang Y."/>
            <person name="Huang X."/>
            <person name="Su Z."/>
            <person name="Tong W."/>
            <person name="Li J."/>
            <person name="Tong Z."/>
            <person name="Li S."/>
            <person name="Ye J."/>
            <person name="Wang L."/>
            <person name="Fang L."/>
            <person name="Lei T."/>
            <person name="Chen C.-S."/>
            <person name="Chen H.-C."/>
            <person name="Xu Z."/>
            <person name="Li H."/>
            <person name="Huang H."/>
            <person name="Zhang F."/>
            <person name="Xu H."/>
            <person name="Li N."/>
            <person name="Zhao C."/>
            <person name="Li S."/>
            <person name="Dong L."/>
            <person name="Huang Y."/>
            <person name="Li L."/>
            <person name="Xi Y."/>
            <person name="Qi Q."/>
            <person name="Li W."/>
            <person name="Zhang B."/>
            <person name="Hu W."/>
            <person name="Zhang Y."/>
            <person name="Tian X."/>
            <person name="Jiao Y."/>
            <person name="Liang X."/>
            <person name="Jin J."/>
            <person name="Gao L."/>
            <person name="Zheng W."/>
            <person name="Hao B."/>
            <person name="Liu S.-M."/>
            <person name="Wang W."/>
            <person name="Yuan L."/>
            <person name="Cao M."/>
            <person name="McDermott J."/>
            <person name="Samudrala R."/>
            <person name="Wang J."/>
            <person name="Wong G.K.-S."/>
            <person name="Yang H."/>
        </authorList>
    </citation>
    <scope>NUCLEOTIDE SEQUENCE [LARGE SCALE GENOMIC DNA]</scope>
    <source>
        <strain>cv. Nipponbare</strain>
    </source>
</reference>
<accession>P49216</accession>
<accession>Q0JI56</accession>
<accession>Q5QM56</accession>
<feature type="chain" id="PRO_0000204523" description="Small ribosomal subunit protein eS26">
    <location>
        <begin position="1"/>
        <end position="133"/>
    </location>
</feature>
<feature type="region of interest" description="Disordered" evidence="1">
    <location>
        <begin position="87"/>
        <end position="133"/>
    </location>
</feature>
<feature type="compositionally biased region" description="Basic and acidic residues" evidence="1">
    <location>
        <begin position="87"/>
        <end position="109"/>
    </location>
</feature>
<feature type="compositionally biased region" description="Low complexity" evidence="1">
    <location>
        <begin position="120"/>
        <end position="133"/>
    </location>
</feature>
<feature type="sequence conflict" description="In Ref. 1; BAA07208." evidence="2" ref="1">
    <original>T</original>
    <variation>I</variation>
    <location>
        <position position="2"/>
    </location>
</feature>
<feature type="sequence conflict" description="In Ref. 1; BAA07208." evidence="2" ref="1">
    <original>N</original>
    <variation>I</variation>
    <location>
        <position position="11"/>
    </location>
</feature>
<feature type="sequence conflict" description="In Ref. 1; BAA07208." evidence="2" ref="1">
    <original>A</original>
    <variation>V</variation>
    <location>
        <position position="48"/>
    </location>
</feature>
<feature type="sequence conflict" description="In Ref. 1; BAA07208." evidence="2" ref="1">
    <original>A</original>
    <variation>G</variation>
    <location>
        <position position="56"/>
    </location>
</feature>
<comment type="similarity">
    <text evidence="2">Belongs to the eukaryotic ribosomal protein eS26 family.</text>
</comment>
<proteinExistence type="evidence at transcript level"/>